<evidence type="ECO:0000250" key="1"/>
<evidence type="ECO:0000250" key="2">
    <source>
        <dbReference type="UniProtKB" id="P01375"/>
    </source>
</evidence>
<evidence type="ECO:0000250" key="3">
    <source>
        <dbReference type="UniProtKB" id="P06804"/>
    </source>
</evidence>
<evidence type="ECO:0000255" key="4"/>
<evidence type="ECO:0000255" key="5">
    <source>
        <dbReference type="PROSITE-ProRule" id="PRU01387"/>
    </source>
</evidence>
<evidence type="ECO:0000305" key="6"/>
<protein>
    <recommendedName>
        <fullName>Tumor necrosis factor</fullName>
    </recommendedName>
    <alternativeName>
        <fullName>Cachectin</fullName>
    </alternativeName>
    <alternativeName>
        <fullName>TNF-alpha</fullName>
    </alternativeName>
    <alternativeName>
        <fullName>Tumor necrosis factor ligand superfamily member 2</fullName>
        <shortName>TNF-a</shortName>
    </alternativeName>
    <component>
        <recommendedName>
            <fullName>Tumor necrosis factor, membrane form</fullName>
        </recommendedName>
        <alternativeName>
            <fullName>N-terminal fragment</fullName>
            <shortName>NTF</shortName>
        </alternativeName>
    </component>
    <component>
        <recommendedName>
            <fullName>Intracellular domain 1</fullName>
            <shortName>ICD1</shortName>
        </recommendedName>
    </component>
    <component>
        <recommendedName>
            <fullName>Intracellular domain 2</fullName>
            <shortName>ICD2</shortName>
        </recommendedName>
    </component>
    <component>
        <recommendedName>
            <fullName>C-domain 1</fullName>
        </recommendedName>
    </component>
    <component>
        <recommendedName>
            <fullName>C-domain 2</fullName>
        </recommendedName>
    </component>
    <component>
        <recommendedName>
            <fullName>Tumor necrosis factor, soluble form</fullName>
        </recommendedName>
    </component>
</protein>
<feature type="chain" id="PRO_0000034433" description="Tumor necrosis factor, membrane form">
    <location>
        <begin position="1"/>
        <end position="233"/>
    </location>
</feature>
<feature type="chain" id="PRO_0000417251" description="Intracellular domain 1" evidence="1">
    <location>
        <begin position="1"/>
        <end position="39"/>
    </location>
</feature>
<feature type="chain" id="PRO_0000417252" description="Intracellular domain 2" evidence="1">
    <location>
        <begin position="1"/>
        <end position="35"/>
    </location>
</feature>
<feature type="chain" id="PRO_0000417253" description="C-domain 1" evidence="1">
    <location>
        <begin position="50"/>
        <end status="unknown"/>
    </location>
</feature>
<feature type="chain" id="PRO_0000417254" description="C-domain 2" evidence="1">
    <location>
        <begin position="52"/>
        <end status="unknown"/>
    </location>
</feature>
<feature type="chain" id="PRO_0000034434" description="Tumor necrosis factor, soluble form">
    <location>
        <begin position="78"/>
        <end position="233"/>
    </location>
</feature>
<feature type="topological domain" description="Cytoplasmic" evidence="4">
    <location>
        <begin position="1"/>
        <end position="35"/>
    </location>
</feature>
<feature type="transmembrane region" description="Helical; Signal-anchor for type II membrane protein" evidence="4">
    <location>
        <begin position="36"/>
        <end position="56"/>
    </location>
</feature>
<feature type="topological domain" description="Extracellular" evidence="4">
    <location>
        <begin position="57"/>
        <end position="233"/>
    </location>
</feature>
<feature type="domain" description="THD" evidence="5">
    <location>
        <begin position="89"/>
        <end position="233"/>
    </location>
</feature>
<feature type="site" description="Cleavage; by SPPL2A or SPPL2B" evidence="1">
    <location>
        <begin position="34"/>
        <end position="35"/>
    </location>
</feature>
<feature type="site" description="Cleavage; by SPPL2A or SPPL2B" evidence="1">
    <location>
        <begin position="39"/>
        <end position="40"/>
    </location>
</feature>
<feature type="site" description="Cleavage; by SPPL2A or SPPL2B" evidence="1">
    <location>
        <begin position="49"/>
        <end position="50"/>
    </location>
</feature>
<feature type="site" description="Cleavage; by SPPL2A or SPPL2B" evidence="1">
    <location>
        <begin position="51"/>
        <end position="52"/>
    </location>
</feature>
<feature type="site" description="Cleavage; by ADAM17" evidence="1">
    <location>
        <begin position="77"/>
        <end position="78"/>
    </location>
</feature>
<feature type="modified residue" description="Phosphoserine; by CK1" evidence="1">
    <location>
        <position position="2"/>
    </location>
</feature>
<feature type="lipid moiety-binding region" description="N6-myristoyl lysine" evidence="2">
    <location>
        <position position="19"/>
    </location>
</feature>
<feature type="glycosylation site" description="O-linked (GalNAc...) serine; in soluble form" evidence="1">
    <location>
        <position position="81"/>
    </location>
</feature>
<feature type="disulfide bond" evidence="5">
    <location>
        <begin position="146"/>
        <end position="177"/>
    </location>
</feature>
<comment type="function">
    <text evidence="2 3">Cytokine that binds to TNFRSF1A/TNFR1 and TNFRSF1B/TNFBR. It is mainly secreted by macrophages and can induce cell death of certain tumor cell lines. It is potent pyrogen causing fever by direct action or by stimulation of interleukin-1 secretion and is implicated in the induction of cachexia, Under certain conditions it can stimulate cell proliferation and induce cell differentiation (By similarity). Induces insulin resistance in adipocytes via inhibition of insulin-induced IRS1 tyrosine phosphorylation and insulin-induced glucose uptake. Induces GKAP42 protein degradation in adipocytes which is partially responsible for TNF-induced insulin resistance (By similarity). Plays a role in angiogenesis by inducing VEGF production synergistically with IL1B and IL6 (By similarity). Promotes osteoclastogenesis and therefore mediates bone resorption (By similarity).</text>
</comment>
<comment type="function">
    <text evidence="2">The TNF intracellular domain (ICD) form induces IL12 production in dendritic cells.</text>
</comment>
<comment type="subunit">
    <text evidence="1">Homotrimer. Interacts with SPPL2B (By similarity).</text>
</comment>
<comment type="subcellular location">
    <subcellularLocation>
        <location evidence="1">Cell membrane</location>
        <topology evidence="1">Single-pass type II membrane protein</topology>
    </subcellularLocation>
</comment>
<comment type="subcellular location">
    <molecule>Tumor necrosis factor, membrane form</molecule>
    <subcellularLocation>
        <location evidence="1">Membrane</location>
        <topology evidence="1">Single-pass type II membrane protein</topology>
    </subcellularLocation>
</comment>
<comment type="subcellular location">
    <molecule>Tumor necrosis factor, soluble form</molecule>
    <subcellularLocation>
        <location evidence="1">Secreted</location>
    </subcellularLocation>
</comment>
<comment type="subcellular location">
    <molecule>C-domain 1</molecule>
    <subcellularLocation>
        <location evidence="1">Secreted</location>
    </subcellularLocation>
</comment>
<comment type="subcellular location">
    <molecule>C-domain 2</molecule>
    <subcellularLocation>
        <location evidence="1">Secreted</location>
    </subcellularLocation>
</comment>
<comment type="PTM">
    <text evidence="1">The soluble form derives from the membrane form by proteolytic processing. The membrane-bound form is further proteolytically processed by SPPL2A or SPPL2B through regulated intramembrane proteolysis producing TNF intracellular domains (ICD1 and ICD2) released in the cytosol and TNF C-domain 1 and C-domain 2 secreted into the extracellular space (By similarity).</text>
</comment>
<comment type="PTM">
    <text evidence="1">The membrane form, but not the soluble form, is phosphorylated on serine residues. Dephosphorylation of the membrane form occurs by binding to soluble TNFRSF1A/TNFR1 (By similarity).</text>
</comment>
<comment type="PTM">
    <text evidence="1">O-glycosylated; glycans contain galactose, N-acetylgalactosamine and N-acetylneuraminic acid.</text>
</comment>
<comment type="PTM">
    <molecule>Tumor necrosis factor, soluble form</molecule>
    <text evidence="2">The soluble form is demyristoylated by SIRT6, promoting its secretion.</text>
</comment>
<comment type="similarity">
    <text evidence="6">Belongs to the tumor necrosis factor family.</text>
</comment>
<organism>
    <name type="scientific">Marmota monax</name>
    <name type="common">Woodchuck</name>
    <dbReference type="NCBI Taxonomy" id="9995"/>
    <lineage>
        <taxon>Eukaryota</taxon>
        <taxon>Metazoa</taxon>
        <taxon>Chordata</taxon>
        <taxon>Craniata</taxon>
        <taxon>Vertebrata</taxon>
        <taxon>Euteleostomi</taxon>
        <taxon>Mammalia</taxon>
        <taxon>Eutheria</taxon>
        <taxon>Euarchontoglires</taxon>
        <taxon>Glires</taxon>
        <taxon>Rodentia</taxon>
        <taxon>Sciuromorpha</taxon>
        <taxon>Sciuridae</taxon>
        <taxon>Xerinae</taxon>
        <taxon>Marmotini</taxon>
        <taxon>Marmota</taxon>
    </lineage>
</organism>
<sequence>MSTESMIRDVELAEEALPKEAWGPQGSSRCLCLSLFSFLLVAGATTLFCLLHFGVIGPQREEFLNNLPLSPQAQMLTLRSSSQNMNDKPVAHVVAKNEDKEQLVWLSRRANALLANGMELIDNQLVVPANGLYLVYSQVLFKGQGCPSYVLLTHTVSRFAVSYQDKVNLLSAIKSPCPKESLEGAEFKPWYEPIYLGGVFELQKGDRLSAEVNLPSYLDFAESGQVYFGVIAL</sequence>
<accession>O35734</accession>
<keyword id="KW-1003">Cell membrane</keyword>
<keyword id="KW-0202">Cytokine</keyword>
<keyword id="KW-1015">Disulfide bond</keyword>
<keyword id="KW-0325">Glycoprotein</keyword>
<keyword id="KW-0449">Lipoprotein</keyword>
<keyword id="KW-0472">Membrane</keyword>
<keyword id="KW-0519">Myristate</keyword>
<keyword id="KW-0597">Phosphoprotein</keyword>
<keyword id="KW-0964">Secreted</keyword>
<keyword id="KW-0735">Signal-anchor</keyword>
<keyword id="KW-0812">Transmembrane</keyword>
<keyword id="KW-1133">Transmembrane helix</keyword>
<proteinExistence type="evidence at transcript level"/>
<name>TNFA_MARMO</name>
<gene>
    <name type="primary">TNF</name>
    <name type="synonym">TNFA</name>
    <name type="synonym">TNFSF2</name>
</gene>
<reference key="1">
    <citation type="journal article" date="1998" name="Immunogenetics">
        <title>Molecular cloning of the woodchuck cytokines: TNF-alpha, IFN-gamma, and IL-6.</title>
        <authorList>
            <person name="Lohrengel B."/>
            <person name="Lu M."/>
            <person name="Roggendorf M."/>
        </authorList>
    </citation>
    <scope>NUCLEOTIDE SEQUENCE [MRNA]</scope>
    <source>
        <tissue>Peripheral blood</tissue>
    </source>
</reference>
<reference key="2">
    <citation type="submission" date="1998-08" db="EMBL/GenBank/DDBJ databases">
        <authorList>
            <person name="Zhou H."/>
            <person name="Hu J."/>
            <person name="Seeger C."/>
        </authorList>
    </citation>
    <scope>NUCLEOTIDE SEQUENCE</scope>
    <source>
        <tissue>Peripheral blood</tissue>
    </source>
</reference>
<reference key="3">
    <citation type="journal article" date="2000" name="Gene">
        <title>Woodchuck lymphotoxin-alpha, -beta and tumor necrosis factor genes: structure, characterization and biological activity.</title>
        <authorList>
            <person name="Li D.H."/>
            <person name="Havell E.A."/>
            <person name="Brown C.L."/>
            <person name="Cullen J.M."/>
        </authorList>
    </citation>
    <scope>NUCLEOTIDE SEQUENCE [GENOMIC DNA / MRNA]</scope>
    <source>
        <tissue>Peripheral blood</tissue>
    </source>
</reference>
<reference key="4">
    <citation type="submission" date="2001-01" db="EMBL/GenBank/DDBJ databases">
        <title>Augmented hepatic interferon gamma expression and T cell influx characterize acute hepatitis progressing to recovery and residual lifelong virus persistence in experimental adult woodchuck hepatitis virus infection.</title>
        <authorList>
            <person name="Hodgson P.D."/>
            <person name="Michalak T.I."/>
        </authorList>
    </citation>
    <scope>NUCLEOTIDE SEQUENCE</scope>
</reference>
<dbReference type="EMBL" id="Y14137">
    <property type="protein sequence ID" value="CAA74569.1"/>
    <property type="molecule type" value="mRNA"/>
</dbReference>
<dbReference type="EMBL" id="AF082491">
    <property type="protein sequence ID" value="AAC32615.1"/>
    <property type="molecule type" value="mRNA"/>
</dbReference>
<dbReference type="EMBL" id="AF012910">
    <property type="protein sequence ID" value="AAF34863.1"/>
    <property type="molecule type" value="mRNA"/>
</dbReference>
<dbReference type="EMBL" id="AF096268">
    <property type="protein sequence ID" value="AAF34867.1"/>
    <property type="molecule type" value="Genomic_DNA"/>
</dbReference>
<dbReference type="EMBL" id="AF333967">
    <property type="protein sequence ID" value="AAK52718.1"/>
    <property type="molecule type" value="mRNA"/>
</dbReference>
<dbReference type="SMR" id="O35734"/>
<dbReference type="GlyCosmos" id="O35734">
    <property type="glycosylation" value="1 site, No reported glycans"/>
</dbReference>
<dbReference type="GO" id="GO:0009986">
    <property type="term" value="C:cell surface"/>
    <property type="evidence" value="ECO:0007669"/>
    <property type="project" value="TreeGrafter"/>
</dbReference>
<dbReference type="GO" id="GO:0005615">
    <property type="term" value="C:extracellular space"/>
    <property type="evidence" value="ECO:0007669"/>
    <property type="project" value="UniProtKB-KW"/>
</dbReference>
<dbReference type="GO" id="GO:0005886">
    <property type="term" value="C:plasma membrane"/>
    <property type="evidence" value="ECO:0007669"/>
    <property type="project" value="UniProtKB-SubCell"/>
</dbReference>
<dbReference type="GO" id="GO:0005125">
    <property type="term" value="F:cytokine activity"/>
    <property type="evidence" value="ECO:0007669"/>
    <property type="project" value="UniProtKB-KW"/>
</dbReference>
<dbReference type="GO" id="GO:0005164">
    <property type="term" value="F:tumor necrosis factor receptor binding"/>
    <property type="evidence" value="ECO:0007669"/>
    <property type="project" value="InterPro"/>
</dbReference>
<dbReference type="GO" id="GO:0008625">
    <property type="term" value="P:extrinsic apoptotic signaling pathway via death domain receptors"/>
    <property type="evidence" value="ECO:0007669"/>
    <property type="project" value="TreeGrafter"/>
</dbReference>
<dbReference type="GO" id="GO:0006955">
    <property type="term" value="P:immune response"/>
    <property type="evidence" value="ECO:0007669"/>
    <property type="project" value="InterPro"/>
</dbReference>
<dbReference type="GO" id="GO:0097527">
    <property type="term" value="P:necroptotic signaling pathway"/>
    <property type="evidence" value="ECO:0000250"/>
    <property type="project" value="UniProtKB"/>
</dbReference>
<dbReference type="GO" id="GO:0043242">
    <property type="term" value="P:negative regulation of protein-containing complex disassembly"/>
    <property type="evidence" value="ECO:0000250"/>
    <property type="project" value="UniProtKB"/>
</dbReference>
<dbReference type="GO" id="GO:0043065">
    <property type="term" value="P:positive regulation of apoptotic process"/>
    <property type="evidence" value="ECO:0000250"/>
    <property type="project" value="UniProtKB"/>
</dbReference>
<dbReference type="GO" id="GO:0043123">
    <property type="term" value="P:positive regulation of canonical NF-kappaB signal transduction"/>
    <property type="evidence" value="ECO:0007669"/>
    <property type="project" value="TreeGrafter"/>
</dbReference>
<dbReference type="GO" id="GO:2001238">
    <property type="term" value="P:positive regulation of extrinsic apoptotic signaling pathway"/>
    <property type="evidence" value="ECO:0007669"/>
    <property type="project" value="TreeGrafter"/>
</dbReference>
<dbReference type="GO" id="GO:0043507">
    <property type="term" value="P:positive regulation of JUN kinase activity"/>
    <property type="evidence" value="ECO:0000250"/>
    <property type="project" value="UniProtKB"/>
</dbReference>
<dbReference type="GO" id="GO:0043406">
    <property type="term" value="P:positive regulation of MAP kinase activity"/>
    <property type="evidence" value="ECO:0000250"/>
    <property type="project" value="UniProtKB"/>
</dbReference>
<dbReference type="GO" id="GO:0051092">
    <property type="term" value="P:positive regulation of NF-kappaB transcription factor activity"/>
    <property type="evidence" value="ECO:0000250"/>
    <property type="project" value="UniProtKB"/>
</dbReference>
<dbReference type="GO" id="GO:0001934">
    <property type="term" value="P:positive regulation of protein phosphorylation"/>
    <property type="evidence" value="ECO:0000250"/>
    <property type="project" value="UniProtKB"/>
</dbReference>
<dbReference type="GO" id="GO:0043243">
    <property type="term" value="P:positive regulation of protein-containing complex disassembly"/>
    <property type="evidence" value="ECO:0000250"/>
    <property type="project" value="UniProtKB"/>
</dbReference>
<dbReference type="GO" id="GO:0045944">
    <property type="term" value="P:positive regulation of transcription by RNA polymerase II"/>
    <property type="evidence" value="ECO:0007669"/>
    <property type="project" value="TreeGrafter"/>
</dbReference>
<dbReference type="GO" id="GO:0065008">
    <property type="term" value="P:regulation of biological quality"/>
    <property type="evidence" value="ECO:0007669"/>
    <property type="project" value="UniProtKB-ARBA"/>
</dbReference>
<dbReference type="GO" id="GO:0050793">
    <property type="term" value="P:regulation of developmental process"/>
    <property type="evidence" value="ECO:0007669"/>
    <property type="project" value="UniProtKB-ARBA"/>
</dbReference>
<dbReference type="GO" id="GO:0051239">
    <property type="term" value="P:regulation of multicellular organismal process"/>
    <property type="evidence" value="ECO:0007669"/>
    <property type="project" value="UniProtKB-ARBA"/>
</dbReference>
<dbReference type="GO" id="GO:0051046">
    <property type="term" value="P:regulation of secretion"/>
    <property type="evidence" value="ECO:0007669"/>
    <property type="project" value="UniProtKB-ARBA"/>
</dbReference>
<dbReference type="GO" id="GO:0033209">
    <property type="term" value="P:tumor necrosis factor-mediated signaling pathway"/>
    <property type="evidence" value="ECO:0007669"/>
    <property type="project" value="TreeGrafter"/>
</dbReference>
<dbReference type="GO" id="GO:0010573">
    <property type="term" value="P:vascular endothelial growth factor production"/>
    <property type="evidence" value="ECO:0000250"/>
    <property type="project" value="UniProtKB"/>
</dbReference>
<dbReference type="CDD" id="cd00184">
    <property type="entry name" value="TNF"/>
    <property type="match status" value="1"/>
</dbReference>
<dbReference type="FunFam" id="2.60.120.40:FF:000007">
    <property type="entry name" value="Tumor necrosis factor"/>
    <property type="match status" value="1"/>
</dbReference>
<dbReference type="Gene3D" id="2.60.120.40">
    <property type="match status" value="1"/>
</dbReference>
<dbReference type="InterPro" id="IPR006053">
    <property type="entry name" value="TNF"/>
</dbReference>
<dbReference type="InterPro" id="IPR002959">
    <property type="entry name" value="TNF_alpha"/>
</dbReference>
<dbReference type="InterPro" id="IPR021184">
    <property type="entry name" value="TNF_CS"/>
</dbReference>
<dbReference type="InterPro" id="IPR006052">
    <property type="entry name" value="TNF_dom"/>
</dbReference>
<dbReference type="InterPro" id="IPR008983">
    <property type="entry name" value="Tumour_necrosis_fac-like_dom"/>
</dbReference>
<dbReference type="PANTHER" id="PTHR11471:SF23">
    <property type="entry name" value="TUMOR NECROSIS FACTOR"/>
    <property type="match status" value="1"/>
</dbReference>
<dbReference type="PANTHER" id="PTHR11471">
    <property type="entry name" value="TUMOR NECROSIS FACTOR FAMILY MEMBER"/>
    <property type="match status" value="1"/>
</dbReference>
<dbReference type="Pfam" id="PF00229">
    <property type="entry name" value="TNF"/>
    <property type="match status" value="1"/>
</dbReference>
<dbReference type="PRINTS" id="PR01234">
    <property type="entry name" value="TNECROSISFCT"/>
</dbReference>
<dbReference type="PRINTS" id="PR01235">
    <property type="entry name" value="TNFALPHA"/>
</dbReference>
<dbReference type="SMART" id="SM00207">
    <property type="entry name" value="TNF"/>
    <property type="match status" value="1"/>
</dbReference>
<dbReference type="SUPFAM" id="SSF49842">
    <property type="entry name" value="TNF-like"/>
    <property type="match status" value="1"/>
</dbReference>
<dbReference type="PROSITE" id="PS00251">
    <property type="entry name" value="THD_1"/>
    <property type="match status" value="1"/>
</dbReference>
<dbReference type="PROSITE" id="PS50049">
    <property type="entry name" value="THD_2"/>
    <property type="match status" value="1"/>
</dbReference>